<comment type="function">
    <text evidence="1">With S4 and S5 plays an important role in translational accuracy.</text>
</comment>
<comment type="function">
    <text evidence="1">Interacts with and stabilizes bases of the 16S rRNA that are involved in tRNA selection in the A site and with the mRNA backbone. Located at the interface of the 30S and 50S subunits, it traverses the body of the 30S subunit contacting proteins on the other side and probably holding the rRNA structure together. The combined cluster of proteins S8, S12 and S17 appears to hold together the shoulder and platform of the 30S subunit.</text>
</comment>
<comment type="subunit">
    <text evidence="1">Part of the 30S ribosomal subunit. Contacts proteins S8 and S17. May interact with IF1 in the 30S initiation complex.</text>
</comment>
<comment type="similarity">
    <text evidence="1">Belongs to the universal ribosomal protein uS12 family.</text>
</comment>
<comment type="caution">
    <text evidence="2">Because the enzyme that would modify Asp-89 to 3-methylthioaspartic acid has not been found in the proteome of this organism, that modification is not predicted.</text>
</comment>
<feature type="chain" id="PRO_0000146283" description="Small ribosomal subunit protein uS12">
    <location>
        <begin position="1"/>
        <end position="124"/>
    </location>
</feature>
<sequence length="124" mass="13702">MATINQLVRKPRSMKVAKSNVPALEACPQKRGVCTRVYTTTPKKPNSALRKVCRVRLTNGYEVSSYIGGEGHNLQEHSVILIRGGRVKDLPGVRYHTVRGALDCSGVKDRKQGRSKYGVKKPKA</sequence>
<dbReference type="EMBL" id="BX571860">
    <property type="protein sequence ID" value="CAE12724.1"/>
    <property type="molecule type" value="Genomic_DNA"/>
</dbReference>
<dbReference type="RefSeq" id="WP_011144815.1">
    <property type="nucleotide sequence ID" value="NC_005126.1"/>
</dbReference>
<dbReference type="SMR" id="Q7N9B4"/>
<dbReference type="STRING" id="243265.plu0429"/>
<dbReference type="GeneID" id="88806577"/>
<dbReference type="KEGG" id="plu:plu0429"/>
<dbReference type="eggNOG" id="COG0048">
    <property type="taxonomic scope" value="Bacteria"/>
</dbReference>
<dbReference type="HOGENOM" id="CLU_104295_1_2_6"/>
<dbReference type="OrthoDB" id="9802366at2"/>
<dbReference type="Proteomes" id="UP000002514">
    <property type="component" value="Chromosome"/>
</dbReference>
<dbReference type="GO" id="GO:0015935">
    <property type="term" value="C:small ribosomal subunit"/>
    <property type="evidence" value="ECO:0007669"/>
    <property type="project" value="InterPro"/>
</dbReference>
<dbReference type="GO" id="GO:0019843">
    <property type="term" value="F:rRNA binding"/>
    <property type="evidence" value="ECO:0007669"/>
    <property type="project" value="UniProtKB-UniRule"/>
</dbReference>
<dbReference type="GO" id="GO:0003735">
    <property type="term" value="F:structural constituent of ribosome"/>
    <property type="evidence" value="ECO:0007669"/>
    <property type="project" value="InterPro"/>
</dbReference>
<dbReference type="GO" id="GO:0000049">
    <property type="term" value="F:tRNA binding"/>
    <property type="evidence" value="ECO:0007669"/>
    <property type="project" value="UniProtKB-UniRule"/>
</dbReference>
<dbReference type="GO" id="GO:0006412">
    <property type="term" value="P:translation"/>
    <property type="evidence" value="ECO:0007669"/>
    <property type="project" value="UniProtKB-UniRule"/>
</dbReference>
<dbReference type="CDD" id="cd03368">
    <property type="entry name" value="Ribosomal_S12"/>
    <property type="match status" value="1"/>
</dbReference>
<dbReference type="FunFam" id="2.40.50.140:FF:000001">
    <property type="entry name" value="30S ribosomal protein S12"/>
    <property type="match status" value="1"/>
</dbReference>
<dbReference type="Gene3D" id="2.40.50.140">
    <property type="entry name" value="Nucleic acid-binding proteins"/>
    <property type="match status" value="1"/>
</dbReference>
<dbReference type="HAMAP" id="MF_00403_B">
    <property type="entry name" value="Ribosomal_uS12_B"/>
    <property type="match status" value="1"/>
</dbReference>
<dbReference type="InterPro" id="IPR012340">
    <property type="entry name" value="NA-bd_OB-fold"/>
</dbReference>
<dbReference type="InterPro" id="IPR006032">
    <property type="entry name" value="Ribosomal_uS12"/>
</dbReference>
<dbReference type="InterPro" id="IPR005679">
    <property type="entry name" value="Ribosomal_uS12_bac"/>
</dbReference>
<dbReference type="NCBIfam" id="TIGR00981">
    <property type="entry name" value="rpsL_bact"/>
    <property type="match status" value="1"/>
</dbReference>
<dbReference type="PANTHER" id="PTHR11652">
    <property type="entry name" value="30S RIBOSOMAL PROTEIN S12 FAMILY MEMBER"/>
    <property type="match status" value="1"/>
</dbReference>
<dbReference type="Pfam" id="PF00164">
    <property type="entry name" value="Ribosom_S12_S23"/>
    <property type="match status" value="1"/>
</dbReference>
<dbReference type="PIRSF" id="PIRSF002133">
    <property type="entry name" value="Ribosomal_S12/S23"/>
    <property type="match status" value="1"/>
</dbReference>
<dbReference type="PRINTS" id="PR01034">
    <property type="entry name" value="RIBOSOMALS12"/>
</dbReference>
<dbReference type="SUPFAM" id="SSF50249">
    <property type="entry name" value="Nucleic acid-binding proteins"/>
    <property type="match status" value="1"/>
</dbReference>
<dbReference type="PROSITE" id="PS00055">
    <property type="entry name" value="RIBOSOMAL_S12"/>
    <property type="match status" value="1"/>
</dbReference>
<accession>Q7N9B4</accession>
<protein>
    <recommendedName>
        <fullName evidence="1">Small ribosomal subunit protein uS12</fullName>
    </recommendedName>
    <alternativeName>
        <fullName evidence="2">30S ribosomal protein S12</fullName>
    </alternativeName>
</protein>
<reference key="1">
    <citation type="journal article" date="2003" name="Nat. Biotechnol.">
        <title>The genome sequence of the entomopathogenic bacterium Photorhabdus luminescens.</title>
        <authorList>
            <person name="Duchaud E."/>
            <person name="Rusniok C."/>
            <person name="Frangeul L."/>
            <person name="Buchrieser C."/>
            <person name="Givaudan A."/>
            <person name="Taourit S."/>
            <person name="Bocs S."/>
            <person name="Boursaux-Eude C."/>
            <person name="Chandler M."/>
            <person name="Charles J.-F."/>
            <person name="Dassa E."/>
            <person name="Derose R."/>
            <person name="Derzelle S."/>
            <person name="Freyssinet G."/>
            <person name="Gaudriault S."/>
            <person name="Medigue C."/>
            <person name="Lanois A."/>
            <person name="Powell K."/>
            <person name="Siguier P."/>
            <person name="Vincent R."/>
            <person name="Wingate V."/>
            <person name="Zouine M."/>
            <person name="Glaser P."/>
            <person name="Boemare N."/>
            <person name="Danchin A."/>
            <person name="Kunst F."/>
        </authorList>
    </citation>
    <scope>NUCLEOTIDE SEQUENCE [LARGE SCALE GENOMIC DNA]</scope>
    <source>
        <strain>DSM 15139 / CIP 105565 / TT01</strain>
    </source>
</reference>
<keyword id="KW-1185">Reference proteome</keyword>
<keyword id="KW-0687">Ribonucleoprotein</keyword>
<keyword id="KW-0689">Ribosomal protein</keyword>
<keyword id="KW-0694">RNA-binding</keyword>
<keyword id="KW-0699">rRNA-binding</keyword>
<keyword id="KW-0820">tRNA-binding</keyword>
<organism>
    <name type="scientific">Photorhabdus laumondii subsp. laumondii (strain DSM 15139 / CIP 105565 / TT01)</name>
    <name type="common">Photorhabdus luminescens subsp. laumondii</name>
    <dbReference type="NCBI Taxonomy" id="243265"/>
    <lineage>
        <taxon>Bacteria</taxon>
        <taxon>Pseudomonadati</taxon>
        <taxon>Pseudomonadota</taxon>
        <taxon>Gammaproteobacteria</taxon>
        <taxon>Enterobacterales</taxon>
        <taxon>Morganellaceae</taxon>
        <taxon>Photorhabdus</taxon>
    </lineage>
</organism>
<gene>
    <name evidence="1" type="primary">rpsL</name>
    <name type="ordered locus">plu0429</name>
</gene>
<name>RS12_PHOLL</name>
<evidence type="ECO:0000255" key="1">
    <source>
        <dbReference type="HAMAP-Rule" id="MF_00403"/>
    </source>
</evidence>
<evidence type="ECO:0000305" key="2"/>
<proteinExistence type="inferred from homology"/>